<dbReference type="EMBL" id="BX293980">
    <property type="protein sequence ID" value="CAE76984.1"/>
    <property type="molecule type" value="Genomic_DNA"/>
</dbReference>
<dbReference type="RefSeq" id="NP_975342.1">
    <property type="nucleotide sequence ID" value="NC_005364.2"/>
</dbReference>
<dbReference type="RefSeq" id="WP_011166540.1">
    <property type="nucleotide sequence ID" value="NC_005364.2"/>
</dbReference>
<dbReference type="SMR" id="Q6MTQ2"/>
<dbReference type="STRING" id="272632.MSC_0347"/>
<dbReference type="KEGG" id="mmy:MSC_0347"/>
<dbReference type="PATRIC" id="fig|272632.4.peg.375"/>
<dbReference type="eggNOG" id="COG0184">
    <property type="taxonomic scope" value="Bacteria"/>
</dbReference>
<dbReference type="HOGENOM" id="CLU_148518_0_0_14"/>
<dbReference type="Proteomes" id="UP000001016">
    <property type="component" value="Chromosome"/>
</dbReference>
<dbReference type="GO" id="GO:0022627">
    <property type="term" value="C:cytosolic small ribosomal subunit"/>
    <property type="evidence" value="ECO:0007669"/>
    <property type="project" value="TreeGrafter"/>
</dbReference>
<dbReference type="GO" id="GO:0019843">
    <property type="term" value="F:rRNA binding"/>
    <property type="evidence" value="ECO:0007669"/>
    <property type="project" value="UniProtKB-UniRule"/>
</dbReference>
<dbReference type="GO" id="GO:0003735">
    <property type="term" value="F:structural constituent of ribosome"/>
    <property type="evidence" value="ECO:0007669"/>
    <property type="project" value="InterPro"/>
</dbReference>
<dbReference type="GO" id="GO:0006412">
    <property type="term" value="P:translation"/>
    <property type="evidence" value="ECO:0007669"/>
    <property type="project" value="UniProtKB-UniRule"/>
</dbReference>
<dbReference type="CDD" id="cd00353">
    <property type="entry name" value="Ribosomal_S15p_S13e"/>
    <property type="match status" value="1"/>
</dbReference>
<dbReference type="Gene3D" id="6.10.250.3130">
    <property type="match status" value="1"/>
</dbReference>
<dbReference type="Gene3D" id="1.10.287.10">
    <property type="entry name" value="S15/NS1, RNA-binding"/>
    <property type="match status" value="1"/>
</dbReference>
<dbReference type="HAMAP" id="MF_01343_B">
    <property type="entry name" value="Ribosomal_uS15_B"/>
    <property type="match status" value="1"/>
</dbReference>
<dbReference type="InterPro" id="IPR000589">
    <property type="entry name" value="Ribosomal_uS15"/>
</dbReference>
<dbReference type="InterPro" id="IPR005290">
    <property type="entry name" value="Ribosomal_uS15_bac-type"/>
</dbReference>
<dbReference type="InterPro" id="IPR009068">
    <property type="entry name" value="uS15_NS1_RNA-bd_sf"/>
</dbReference>
<dbReference type="NCBIfam" id="TIGR00952">
    <property type="entry name" value="S15_bact"/>
    <property type="match status" value="1"/>
</dbReference>
<dbReference type="PANTHER" id="PTHR23321">
    <property type="entry name" value="RIBOSOMAL PROTEIN S15, BACTERIAL AND ORGANELLAR"/>
    <property type="match status" value="1"/>
</dbReference>
<dbReference type="PANTHER" id="PTHR23321:SF26">
    <property type="entry name" value="SMALL RIBOSOMAL SUBUNIT PROTEIN US15M"/>
    <property type="match status" value="1"/>
</dbReference>
<dbReference type="Pfam" id="PF00312">
    <property type="entry name" value="Ribosomal_S15"/>
    <property type="match status" value="1"/>
</dbReference>
<dbReference type="SMART" id="SM01387">
    <property type="entry name" value="Ribosomal_S15"/>
    <property type="match status" value="1"/>
</dbReference>
<dbReference type="SUPFAM" id="SSF47060">
    <property type="entry name" value="S15/NS1 RNA-binding domain"/>
    <property type="match status" value="1"/>
</dbReference>
<reference key="1">
    <citation type="journal article" date="2004" name="Genome Res.">
        <title>The genome sequence of Mycoplasma mycoides subsp. mycoides SC type strain PG1T, the causative agent of contagious bovine pleuropneumonia (CBPP).</title>
        <authorList>
            <person name="Westberg J."/>
            <person name="Persson A."/>
            <person name="Holmberg A."/>
            <person name="Goesmann A."/>
            <person name="Lundeberg J."/>
            <person name="Johansson K.-E."/>
            <person name="Pettersson B."/>
            <person name="Uhlen M."/>
        </authorList>
    </citation>
    <scope>NUCLEOTIDE SEQUENCE [LARGE SCALE GENOMIC DNA]</scope>
    <source>
        <strain>CCUG 32753 / NCTC 10114 / PG1</strain>
    </source>
</reference>
<protein>
    <recommendedName>
        <fullName evidence="1">Small ribosomal subunit protein uS15</fullName>
    </recommendedName>
    <alternativeName>
        <fullName evidence="2">30S ribosomal protein S15</fullName>
    </alternativeName>
</protein>
<sequence>MVSKEQKLALIKEFGGDEKNTGLAEVQIAILTAEISNLTEHLKMHKKDIPTRRTLLKKVAQRRHFLDYLVKKDVNRYKEVIGKLGIRK</sequence>
<organism>
    <name type="scientific">Mycoplasma mycoides subsp. mycoides SC (strain CCUG 32753 / NCTC 10114 / PG1)</name>
    <dbReference type="NCBI Taxonomy" id="272632"/>
    <lineage>
        <taxon>Bacteria</taxon>
        <taxon>Bacillati</taxon>
        <taxon>Mycoplasmatota</taxon>
        <taxon>Mollicutes</taxon>
        <taxon>Mycoplasmataceae</taxon>
        <taxon>Mycoplasma</taxon>
    </lineage>
</organism>
<feature type="chain" id="PRO_0000115482" description="Small ribosomal subunit protein uS15">
    <location>
        <begin position="1"/>
        <end position="88"/>
    </location>
</feature>
<comment type="function">
    <text evidence="1">One of the primary rRNA binding proteins, it binds directly to 16S rRNA where it helps nucleate assembly of the platform of the 30S subunit by binding and bridging several RNA helices of the 16S rRNA.</text>
</comment>
<comment type="function">
    <text evidence="1">Forms an intersubunit bridge (bridge B4) with the 23S rRNA of the 50S subunit in the ribosome.</text>
</comment>
<comment type="subunit">
    <text evidence="1">Part of the 30S ribosomal subunit. Forms a bridge to the 50S subunit in the 70S ribosome, contacting the 23S rRNA.</text>
</comment>
<comment type="similarity">
    <text evidence="1">Belongs to the universal ribosomal protein uS15 family.</text>
</comment>
<gene>
    <name evidence="1" type="primary">rpsO</name>
    <name type="ordered locus">MSC_0347</name>
</gene>
<evidence type="ECO:0000255" key="1">
    <source>
        <dbReference type="HAMAP-Rule" id="MF_01343"/>
    </source>
</evidence>
<evidence type="ECO:0000305" key="2"/>
<name>RS15_MYCMS</name>
<accession>Q6MTQ2</accession>
<keyword id="KW-1185">Reference proteome</keyword>
<keyword id="KW-0687">Ribonucleoprotein</keyword>
<keyword id="KW-0689">Ribosomal protein</keyword>
<keyword id="KW-0694">RNA-binding</keyword>
<keyword id="KW-0699">rRNA-binding</keyword>
<proteinExistence type="inferred from homology"/>